<proteinExistence type="evidence at transcript level"/>
<protein>
    <recommendedName>
        <fullName>Serine/threonine-protein phosphatase 2A 55 kDa regulatory subunit B beta isoform</fullName>
    </recommendedName>
    <alternativeName>
        <fullName>PP2A subunit B isoform B55-beta</fullName>
    </alternativeName>
    <alternativeName>
        <fullName>PP2A subunit B isoform PR55-beta</fullName>
    </alternativeName>
    <alternativeName>
        <fullName>PP2A subunit B isoform R2-beta</fullName>
    </alternativeName>
    <alternativeName>
        <fullName>PP2A subunit B isoform beta</fullName>
    </alternativeName>
</protein>
<sequence length="443" mass="51460">MEEDIDTRKINNSFLRDHSYATEADIISAVEFNHTGELLATGDKGGRVVIFQREQESKNQVHRRGEYNVYSTFQSHEPEFDYLKSLEIEEKINKIRWLPQQNAAYFLLSTNDKTVKLWKVSERDKRPEGYNLKDEEGRLRDPATITTLRVPVLRPMDLMVEATPRRVFANAHTYHINSISVNSDYETYMSADDLRINLWNFEITNQSFNIADIKPANMEELTEVITAAEFHPHHCNTFVYSSSKGTIRLCDMRASACVTGTPNFLKEPEDPSNRSFSLKLSSSISDVKFSQQWEDIMTRDYLTVKVWDLNMENRPIETYQVHNYLRSKLCSLYENDCIFDKFECVWNGSDSVIMTGSYNNFFRMFDRNTKRDVTLEASRENSKPRAILKPRKVCVGGKRRKDEISVDSLDFSKKILHTAWHPSENIIAVAATNNLYIFQDKVN</sequence>
<feature type="chain" id="PRO_0000071424" description="Serine/threonine-protein phosphatase 2A 55 kDa regulatory subunit B beta isoform">
    <location>
        <begin position="1"/>
        <end position="443"/>
    </location>
</feature>
<feature type="repeat" description="WD 1">
    <location>
        <begin position="22"/>
        <end position="61"/>
    </location>
</feature>
<feature type="repeat" description="WD 2">
    <location>
        <begin position="87"/>
        <end position="128"/>
    </location>
</feature>
<feature type="repeat" description="WD 3">
    <location>
        <begin position="171"/>
        <end position="209"/>
    </location>
</feature>
<feature type="repeat" description="WD 4">
    <location>
        <begin position="220"/>
        <end position="260"/>
    </location>
</feature>
<feature type="repeat" description="WD 5">
    <location>
        <begin position="279"/>
        <end position="317"/>
    </location>
</feature>
<feature type="repeat" description="WD 6">
    <location>
        <begin position="334"/>
        <end position="375"/>
    </location>
</feature>
<feature type="repeat" description="WD 7">
    <location>
        <begin position="410"/>
        <end position="442"/>
    </location>
</feature>
<feature type="modified residue" description="Phosphoserine" evidence="2">
    <location>
        <position position="275"/>
    </location>
</feature>
<feature type="modified residue" description="Phosphothreonine" evidence="2">
    <location>
        <position position="298"/>
    </location>
</feature>
<evidence type="ECO:0000250" key="1"/>
<evidence type="ECO:0000250" key="2">
    <source>
        <dbReference type="UniProtKB" id="P36877"/>
    </source>
</evidence>
<evidence type="ECO:0000250" key="3">
    <source>
        <dbReference type="UniProtKB" id="Q00005"/>
    </source>
</evidence>
<evidence type="ECO:0000305" key="4"/>
<keyword id="KW-0963">Cytoplasm</keyword>
<keyword id="KW-0206">Cytoskeleton</keyword>
<keyword id="KW-0472">Membrane</keyword>
<keyword id="KW-0597">Phosphoprotein</keyword>
<keyword id="KW-1185">Reference proteome</keyword>
<keyword id="KW-0677">Repeat</keyword>
<keyword id="KW-0853">WD repeat</keyword>
<accession>P54614</accession>
<gene>
    <name type="primary">PPP2R2B</name>
</gene>
<reference key="1">
    <citation type="thesis" date="1992" institute="Friedrich Miescher Institut / Basel" country="Switzerland">
        <authorList>
            <person name="Mayer-Jaekel R.E."/>
        </authorList>
    </citation>
    <scope>NUCLEOTIDE SEQUENCE [MRNA]</scope>
</reference>
<name>2ABB_PIG</name>
<comment type="function">
    <text>The B regulatory subunit might modulate substrate selectivity and catalytic activity, and might also direct the localization of the catalytic enzyme to a particular subcellular compartment.</text>
</comment>
<comment type="subunit">
    <text evidence="1 2 3">PP2A consists of a common heterodimeric core enzyme, composed of a 36 kDa catalytic subunit (subunit C) and a 65 kDa constant regulatory subunit (PR65 or subunit A), that associates with a variety of regulatory subunits. Proteins that associate with the core dimer include three families of regulatory subunits B (the R2/B/PR55/B55, R3/B''/PR72/PR130/PR59 and R5/B'/B56 families), the 48 kDa variable regulatory subunit, viral proteins, and cell signaling molecules (By similarity). Interacts with TOMM22 (By similarity). Interacts with IER5 (via N- and C-terminal regions) (By similarity).</text>
</comment>
<comment type="subcellular location">
    <subcellularLocation>
        <location evidence="1">Cytoplasm</location>
    </subcellularLocation>
    <subcellularLocation>
        <location evidence="1">Cytoplasm</location>
        <location evidence="1">Cytoskeleton</location>
    </subcellularLocation>
    <subcellularLocation>
        <location evidence="1">Membrane</location>
    </subcellularLocation>
</comment>
<comment type="tissue specificity">
    <text>Brain.</text>
</comment>
<comment type="similarity">
    <text evidence="4">Belongs to the phosphatase 2A regulatory subunit B family.</text>
</comment>
<dbReference type="EMBL" id="Z34933">
    <property type="protein sequence ID" value="CAA84405.1"/>
    <property type="molecule type" value="mRNA"/>
</dbReference>
<dbReference type="RefSeq" id="NP_999190.1">
    <property type="nucleotide sequence ID" value="NM_214025.2"/>
</dbReference>
<dbReference type="SMR" id="P54614"/>
<dbReference type="FunCoup" id="P54614">
    <property type="interactions" value="335"/>
</dbReference>
<dbReference type="STRING" id="9823.ENSSSCP00000069410"/>
<dbReference type="PaxDb" id="9823-ENSSSCP00000021916"/>
<dbReference type="PeptideAtlas" id="P54614"/>
<dbReference type="GeneID" id="397089"/>
<dbReference type="KEGG" id="ssc:397089"/>
<dbReference type="CTD" id="5521"/>
<dbReference type="eggNOG" id="KOG1354">
    <property type="taxonomic scope" value="Eukaryota"/>
</dbReference>
<dbReference type="InParanoid" id="P54614"/>
<dbReference type="OrthoDB" id="6274823at2759"/>
<dbReference type="Proteomes" id="UP000008227">
    <property type="component" value="Unplaced"/>
</dbReference>
<dbReference type="Proteomes" id="UP000314985">
    <property type="component" value="Unplaced"/>
</dbReference>
<dbReference type="Proteomes" id="UP000694570">
    <property type="component" value="Unplaced"/>
</dbReference>
<dbReference type="Proteomes" id="UP000694571">
    <property type="component" value="Unplaced"/>
</dbReference>
<dbReference type="Proteomes" id="UP000694720">
    <property type="component" value="Unplaced"/>
</dbReference>
<dbReference type="Proteomes" id="UP000694722">
    <property type="component" value="Unplaced"/>
</dbReference>
<dbReference type="Proteomes" id="UP000694723">
    <property type="component" value="Unplaced"/>
</dbReference>
<dbReference type="Proteomes" id="UP000694724">
    <property type="component" value="Unplaced"/>
</dbReference>
<dbReference type="Proteomes" id="UP000694725">
    <property type="component" value="Unplaced"/>
</dbReference>
<dbReference type="Proteomes" id="UP000694726">
    <property type="component" value="Unplaced"/>
</dbReference>
<dbReference type="Proteomes" id="UP000694727">
    <property type="component" value="Unplaced"/>
</dbReference>
<dbReference type="Proteomes" id="UP000694728">
    <property type="component" value="Unplaced"/>
</dbReference>
<dbReference type="GO" id="GO:0005856">
    <property type="term" value="C:cytoskeleton"/>
    <property type="evidence" value="ECO:0007669"/>
    <property type="project" value="UniProtKB-SubCell"/>
</dbReference>
<dbReference type="GO" id="GO:0005829">
    <property type="term" value="C:cytosol"/>
    <property type="evidence" value="ECO:0000318"/>
    <property type="project" value="GO_Central"/>
</dbReference>
<dbReference type="GO" id="GO:0016020">
    <property type="term" value="C:membrane"/>
    <property type="evidence" value="ECO:0007669"/>
    <property type="project" value="UniProtKB-SubCell"/>
</dbReference>
<dbReference type="GO" id="GO:0000159">
    <property type="term" value="C:protein phosphatase type 2A complex"/>
    <property type="evidence" value="ECO:0000318"/>
    <property type="project" value="GO_Central"/>
</dbReference>
<dbReference type="GO" id="GO:0019888">
    <property type="term" value="F:protein phosphatase regulator activity"/>
    <property type="evidence" value="ECO:0000318"/>
    <property type="project" value="GO_Central"/>
</dbReference>
<dbReference type="FunFam" id="2.130.10.10:FF:000002">
    <property type="entry name" value="Serine/threonine-protein phosphatase 2A 55 kDa regulatory subunit B"/>
    <property type="match status" value="1"/>
</dbReference>
<dbReference type="Gene3D" id="2.130.10.10">
    <property type="entry name" value="YVTN repeat-like/Quinoprotein amine dehydrogenase"/>
    <property type="match status" value="1"/>
</dbReference>
<dbReference type="InterPro" id="IPR000009">
    <property type="entry name" value="PP2A_PR55"/>
</dbReference>
<dbReference type="InterPro" id="IPR018067">
    <property type="entry name" value="PP2A_PR55_CS"/>
</dbReference>
<dbReference type="InterPro" id="IPR015943">
    <property type="entry name" value="WD40/YVTN_repeat-like_dom_sf"/>
</dbReference>
<dbReference type="InterPro" id="IPR036322">
    <property type="entry name" value="WD40_repeat_dom_sf"/>
</dbReference>
<dbReference type="InterPro" id="IPR001680">
    <property type="entry name" value="WD40_rpt"/>
</dbReference>
<dbReference type="PANTHER" id="PTHR11871">
    <property type="entry name" value="PROTEIN PHOSPHATASE PP2A REGULATORY SUBUNIT B"/>
    <property type="match status" value="1"/>
</dbReference>
<dbReference type="PIRSF" id="PIRSF037309">
    <property type="entry name" value="PP2A_PR55"/>
    <property type="match status" value="1"/>
</dbReference>
<dbReference type="PRINTS" id="PR00600">
    <property type="entry name" value="PP2APR55"/>
</dbReference>
<dbReference type="SMART" id="SM00320">
    <property type="entry name" value="WD40"/>
    <property type="match status" value="5"/>
</dbReference>
<dbReference type="SUPFAM" id="SSF50978">
    <property type="entry name" value="WD40 repeat-like"/>
    <property type="match status" value="1"/>
</dbReference>
<dbReference type="PROSITE" id="PS01024">
    <property type="entry name" value="PR55_1"/>
    <property type="match status" value="1"/>
</dbReference>
<dbReference type="PROSITE" id="PS01025">
    <property type="entry name" value="PR55_2"/>
    <property type="match status" value="1"/>
</dbReference>
<dbReference type="PROSITE" id="PS00678">
    <property type="entry name" value="WD_REPEATS_1"/>
    <property type="match status" value="1"/>
</dbReference>
<organism>
    <name type="scientific">Sus scrofa</name>
    <name type="common">Pig</name>
    <dbReference type="NCBI Taxonomy" id="9823"/>
    <lineage>
        <taxon>Eukaryota</taxon>
        <taxon>Metazoa</taxon>
        <taxon>Chordata</taxon>
        <taxon>Craniata</taxon>
        <taxon>Vertebrata</taxon>
        <taxon>Euteleostomi</taxon>
        <taxon>Mammalia</taxon>
        <taxon>Eutheria</taxon>
        <taxon>Laurasiatheria</taxon>
        <taxon>Artiodactyla</taxon>
        <taxon>Suina</taxon>
        <taxon>Suidae</taxon>
        <taxon>Sus</taxon>
    </lineage>
</organism>